<sequence>MLVMGRKKGESILIGDDIEITIVSLDENSVKIAINAPREVTILRKELYNKIKEENKEAVIKSSEVLKELTLKK</sequence>
<comment type="function">
    <text evidence="1">A translational regulator that binds mRNA to regulate translation initiation and/or mRNA stability. Usually binds in the 5'-UTR at or near the Shine-Dalgarno sequence preventing ribosome-binding, thus repressing translation. Its main target seems to be the major flagellin gene, while its function is anatagonized by FliW.</text>
</comment>
<comment type="subunit">
    <text evidence="1">Homodimer; the beta-strands of each monomer intercalate to form a hydrophobic core, while the alpha-helices form wings that extend away from the core.</text>
</comment>
<comment type="subcellular location">
    <subcellularLocation>
        <location evidence="1">Cytoplasm</location>
    </subcellularLocation>
</comment>
<comment type="similarity">
    <text evidence="1">Belongs to the CsrA/RsmA family.</text>
</comment>
<gene>
    <name evidence="1" type="primary">csrA</name>
    <name type="ordered locus">CA_C2209</name>
</gene>
<organism>
    <name type="scientific">Clostridium acetobutylicum (strain ATCC 824 / DSM 792 / JCM 1419 / IAM 19013 / LMG 5710 / NBRC 13948 / NRRL B-527 / VKM B-1787 / 2291 / W)</name>
    <dbReference type="NCBI Taxonomy" id="272562"/>
    <lineage>
        <taxon>Bacteria</taxon>
        <taxon>Bacillati</taxon>
        <taxon>Bacillota</taxon>
        <taxon>Clostridia</taxon>
        <taxon>Eubacteriales</taxon>
        <taxon>Clostridiaceae</taxon>
        <taxon>Clostridium</taxon>
    </lineage>
</organism>
<protein>
    <recommendedName>
        <fullName evidence="1">Translational regulator CsrA</fullName>
    </recommendedName>
</protein>
<name>CSRA_CLOAB</name>
<reference key="1">
    <citation type="journal article" date="2001" name="J. Bacteriol.">
        <title>Genome sequence and comparative analysis of the solvent-producing bacterium Clostridium acetobutylicum.</title>
        <authorList>
            <person name="Noelling J."/>
            <person name="Breton G."/>
            <person name="Omelchenko M.V."/>
            <person name="Makarova K.S."/>
            <person name="Zeng Q."/>
            <person name="Gibson R."/>
            <person name="Lee H.M."/>
            <person name="Dubois J."/>
            <person name="Qiu D."/>
            <person name="Hitti J."/>
            <person name="Wolf Y.I."/>
            <person name="Tatusov R.L."/>
            <person name="Sabathe F."/>
            <person name="Doucette-Stamm L.A."/>
            <person name="Soucaille P."/>
            <person name="Daly M.J."/>
            <person name="Bennett G.N."/>
            <person name="Koonin E.V."/>
            <person name="Smith D.R."/>
        </authorList>
    </citation>
    <scope>NUCLEOTIDE SEQUENCE [LARGE SCALE GENOMIC DNA]</scope>
    <source>
        <strain>ATCC 824 / DSM 792 / JCM 1419 / IAM 19013 / LMG 5710 / NBRC 13948 / NRRL B-527 / VKM B-1787 / 2291 / W</strain>
    </source>
</reference>
<accession>Q97H06</accession>
<evidence type="ECO:0000255" key="1">
    <source>
        <dbReference type="HAMAP-Rule" id="MF_00167"/>
    </source>
</evidence>
<feature type="chain" id="PRO_0000177056" description="Translational regulator CsrA">
    <location>
        <begin position="1"/>
        <end position="73"/>
    </location>
</feature>
<proteinExistence type="inferred from homology"/>
<keyword id="KW-1005">Bacterial flagellum biogenesis</keyword>
<keyword id="KW-0963">Cytoplasm</keyword>
<keyword id="KW-1185">Reference proteome</keyword>
<keyword id="KW-0678">Repressor</keyword>
<keyword id="KW-0694">RNA-binding</keyword>
<keyword id="KW-0810">Translation regulation</keyword>
<dbReference type="EMBL" id="AE001437">
    <property type="protein sequence ID" value="AAK80166.1"/>
    <property type="molecule type" value="Genomic_DNA"/>
</dbReference>
<dbReference type="PIR" id="C97172">
    <property type="entry name" value="C97172"/>
</dbReference>
<dbReference type="RefSeq" id="NP_348826.1">
    <property type="nucleotide sequence ID" value="NC_003030.1"/>
</dbReference>
<dbReference type="RefSeq" id="WP_010965507.1">
    <property type="nucleotide sequence ID" value="NC_003030.1"/>
</dbReference>
<dbReference type="SMR" id="Q97H06"/>
<dbReference type="STRING" id="272562.CA_C2209"/>
<dbReference type="GeneID" id="44998688"/>
<dbReference type="KEGG" id="cac:CA_C2209"/>
<dbReference type="PATRIC" id="fig|272562.8.peg.2410"/>
<dbReference type="eggNOG" id="COG1551">
    <property type="taxonomic scope" value="Bacteria"/>
</dbReference>
<dbReference type="HOGENOM" id="CLU_164837_0_0_9"/>
<dbReference type="OrthoDB" id="9809061at2"/>
<dbReference type="Proteomes" id="UP000000814">
    <property type="component" value="Chromosome"/>
</dbReference>
<dbReference type="GO" id="GO:0005829">
    <property type="term" value="C:cytosol"/>
    <property type="evidence" value="ECO:0007669"/>
    <property type="project" value="TreeGrafter"/>
</dbReference>
<dbReference type="GO" id="GO:0048027">
    <property type="term" value="F:mRNA 5'-UTR binding"/>
    <property type="evidence" value="ECO:0007669"/>
    <property type="project" value="UniProtKB-UniRule"/>
</dbReference>
<dbReference type="GO" id="GO:0044781">
    <property type="term" value="P:bacterial-type flagellum organization"/>
    <property type="evidence" value="ECO:0007669"/>
    <property type="project" value="UniProtKB-KW"/>
</dbReference>
<dbReference type="GO" id="GO:0006402">
    <property type="term" value="P:mRNA catabolic process"/>
    <property type="evidence" value="ECO:0007669"/>
    <property type="project" value="InterPro"/>
</dbReference>
<dbReference type="GO" id="GO:0045947">
    <property type="term" value="P:negative regulation of translational initiation"/>
    <property type="evidence" value="ECO:0007669"/>
    <property type="project" value="UniProtKB-UniRule"/>
</dbReference>
<dbReference type="GO" id="GO:1902208">
    <property type="term" value="P:regulation of bacterial-type flagellum assembly"/>
    <property type="evidence" value="ECO:0007669"/>
    <property type="project" value="UniProtKB-UniRule"/>
</dbReference>
<dbReference type="GO" id="GO:0006109">
    <property type="term" value="P:regulation of carbohydrate metabolic process"/>
    <property type="evidence" value="ECO:0007669"/>
    <property type="project" value="InterPro"/>
</dbReference>
<dbReference type="FunFam" id="2.60.40.4380:FF:000002">
    <property type="entry name" value="Translational regulator CsrA"/>
    <property type="match status" value="1"/>
</dbReference>
<dbReference type="Gene3D" id="2.60.40.4380">
    <property type="entry name" value="Translational regulator CsrA"/>
    <property type="match status" value="1"/>
</dbReference>
<dbReference type="HAMAP" id="MF_00167">
    <property type="entry name" value="CsrA"/>
    <property type="match status" value="1"/>
</dbReference>
<dbReference type="InterPro" id="IPR003751">
    <property type="entry name" value="CsrA"/>
</dbReference>
<dbReference type="InterPro" id="IPR036107">
    <property type="entry name" value="CsrA_sf"/>
</dbReference>
<dbReference type="NCBIfam" id="TIGR00202">
    <property type="entry name" value="csrA"/>
    <property type="match status" value="1"/>
</dbReference>
<dbReference type="NCBIfam" id="NF002469">
    <property type="entry name" value="PRK01712.1"/>
    <property type="match status" value="1"/>
</dbReference>
<dbReference type="PANTHER" id="PTHR34984">
    <property type="entry name" value="CARBON STORAGE REGULATOR"/>
    <property type="match status" value="1"/>
</dbReference>
<dbReference type="PANTHER" id="PTHR34984:SF1">
    <property type="entry name" value="CARBON STORAGE REGULATOR"/>
    <property type="match status" value="1"/>
</dbReference>
<dbReference type="Pfam" id="PF02599">
    <property type="entry name" value="CsrA"/>
    <property type="match status" value="1"/>
</dbReference>
<dbReference type="SUPFAM" id="SSF117130">
    <property type="entry name" value="CsrA-like"/>
    <property type="match status" value="1"/>
</dbReference>